<accession>Q2SWE3</accession>
<keyword id="KW-0002">3D-structure</keyword>
<keyword id="KW-0030">Aminoacyl-tRNA synthetase</keyword>
<keyword id="KW-0067">ATP-binding</keyword>
<keyword id="KW-0963">Cytoplasm</keyword>
<keyword id="KW-0436">Ligase</keyword>
<keyword id="KW-0547">Nucleotide-binding</keyword>
<keyword id="KW-0648">Protein biosynthesis</keyword>
<reference key="1">
    <citation type="journal article" date="2005" name="BMC Genomics">
        <title>Bacterial genome adaptation to niches: divergence of the potential virulence genes in three Burkholderia species of different survival strategies.</title>
        <authorList>
            <person name="Kim H.S."/>
            <person name="Schell M.A."/>
            <person name="Yu Y."/>
            <person name="Ulrich R.L."/>
            <person name="Sarria S.H."/>
            <person name="Nierman W.C."/>
            <person name="DeShazer D."/>
        </authorList>
    </citation>
    <scope>NUCLEOTIDE SEQUENCE [LARGE SCALE GENOMIC DNA]</scope>
    <source>
        <strain>ATCC 700388 / DSM 13276 / CCUG 48851 / CIP 106301 / E264</strain>
    </source>
</reference>
<evidence type="ECO:0000255" key="1">
    <source>
        <dbReference type="HAMAP-Rule" id="MF_00127"/>
    </source>
</evidence>
<evidence type="ECO:0000256" key="2">
    <source>
        <dbReference type="SAM" id="MobiDB-lite"/>
    </source>
</evidence>
<evidence type="ECO:0007829" key="3">
    <source>
        <dbReference type="PDB" id="4E51"/>
    </source>
</evidence>
<organism>
    <name type="scientific">Burkholderia thailandensis (strain ATCC 700388 / DSM 13276 / CCUG 48851 / CIP 106301 / E264)</name>
    <dbReference type="NCBI Taxonomy" id="271848"/>
    <lineage>
        <taxon>Bacteria</taxon>
        <taxon>Pseudomonadati</taxon>
        <taxon>Pseudomonadota</taxon>
        <taxon>Betaproteobacteria</taxon>
        <taxon>Burkholderiales</taxon>
        <taxon>Burkholderiaceae</taxon>
        <taxon>Burkholderia</taxon>
        <taxon>pseudomallei group</taxon>
    </lineage>
</organism>
<protein>
    <recommendedName>
        <fullName evidence="1">Histidine--tRNA ligase</fullName>
        <ecNumber evidence="1">6.1.1.21</ecNumber>
    </recommendedName>
    <alternativeName>
        <fullName evidence="1">Histidyl-tRNA synthetase</fullName>
        <shortName evidence="1">HisRS</shortName>
    </alternativeName>
</protein>
<proteinExistence type="evidence at protein level"/>
<gene>
    <name evidence="1" type="primary">hisS</name>
    <name type="ordered locus">BTH_I2235</name>
</gene>
<feature type="chain" id="PRO_1000016329" description="Histidine--tRNA ligase">
    <location>
        <begin position="1"/>
        <end position="446"/>
    </location>
</feature>
<feature type="region of interest" description="Disordered" evidence="2">
    <location>
        <begin position="403"/>
        <end position="422"/>
    </location>
</feature>
<feature type="helix" evidence="3">
    <location>
        <begin position="22"/>
        <end position="41"/>
    </location>
</feature>
<feature type="strand" evidence="3">
    <location>
        <begin position="51"/>
        <end position="54"/>
    </location>
</feature>
<feature type="helix" evidence="3">
    <location>
        <begin position="55"/>
        <end position="61"/>
    </location>
</feature>
<feature type="helix" evidence="3">
    <location>
        <begin position="67"/>
        <end position="71"/>
    </location>
</feature>
<feature type="strand" evidence="3">
    <location>
        <begin position="75"/>
        <end position="77"/>
    </location>
</feature>
<feature type="turn" evidence="3">
    <location>
        <begin position="79"/>
        <end position="81"/>
    </location>
</feature>
<feature type="strand" evidence="3">
    <location>
        <begin position="84"/>
        <end position="87"/>
    </location>
</feature>
<feature type="helix" evidence="3">
    <location>
        <begin position="92"/>
        <end position="101"/>
    </location>
</feature>
<feature type="turn" evidence="3">
    <location>
        <begin position="102"/>
        <end position="107"/>
    </location>
</feature>
<feature type="strand" evidence="3">
    <location>
        <begin position="110"/>
        <end position="119"/>
    </location>
</feature>
<feature type="strand" evidence="3">
    <location>
        <begin position="130"/>
        <end position="140"/>
    </location>
</feature>
<feature type="helix" evidence="3">
    <location>
        <begin position="146"/>
        <end position="162"/>
    </location>
</feature>
<feature type="strand" evidence="3">
    <location>
        <begin position="167"/>
        <end position="173"/>
    </location>
</feature>
<feature type="helix" evidence="3">
    <location>
        <begin position="177"/>
        <end position="192"/>
    </location>
</feature>
<feature type="helix" evidence="3">
    <location>
        <begin position="193"/>
        <end position="197"/>
    </location>
</feature>
<feature type="helix" evidence="3">
    <location>
        <begin position="200"/>
        <end position="206"/>
    </location>
</feature>
<feature type="helix" evidence="3">
    <location>
        <begin position="211"/>
        <end position="214"/>
    </location>
</feature>
<feature type="helix" evidence="3">
    <location>
        <begin position="219"/>
        <end position="221"/>
    </location>
</feature>
<feature type="helix" evidence="3">
    <location>
        <begin position="222"/>
        <end position="226"/>
    </location>
</feature>
<feature type="helix" evidence="3">
    <location>
        <begin position="231"/>
        <end position="234"/>
    </location>
</feature>
<feature type="helix" evidence="3">
    <location>
        <begin position="237"/>
        <end position="252"/>
    </location>
</feature>
<feature type="strand" evidence="3">
    <location>
        <begin position="257"/>
        <end position="259"/>
    </location>
</feature>
<feature type="strand" evidence="3">
    <location>
        <begin position="272"/>
        <end position="279"/>
    </location>
</feature>
<feature type="strand" evidence="3">
    <location>
        <begin position="287"/>
        <end position="293"/>
    </location>
</feature>
<feature type="helix" evidence="3">
    <location>
        <begin position="297"/>
        <end position="300"/>
    </location>
</feature>
<feature type="strand" evidence="3">
    <location>
        <begin position="308"/>
        <end position="314"/>
    </location>
</feature>
<feature type="helix" evidence="3">
    <location>
        <begin position="315"/>
        <end position="324"/>
    </location>
</feature>
<feature type="strand" evidence="3">
    <location>
        <begin position="335"/>
        <end position="340"/>
    </location>
</feature>
<feature type="helix" evidence="3">
    <location>
        <begin position="343"/>
        <end position="358"/>
    </location>
</feature>
<feature type="strand" evidence="3">
    <location>
        <begin position="363"/>
        <end position="365"/>
    </location>
</feature>
<feature type="helix" evidence="3">
    <location>
        <begin position="376"/>
        <end position="385"/>
    </location>
</feature>
<feature type="strand" evidence="3">
    <location>
        <begin position="389"/>
        <end position="394"/>
    </location>
</feature>
<feature type="helix" evidence="3">
    <location>
        <begin position="396"/>
        <end position="401"/>
    </location>
</feature>
<feature type="strand" evidence="3">
    <location>
        <begin position="403"/>
        <end position="408"/>
    </location>
</feature>
<feature type="strand" evidence="3">
    <location>
        <begin position="422"/>
        <end position="425"/>
    </location>
</feature>
<feature type="helix" evidence="3">
    <location>
        <begin position="426"/>
        <end position="428"/>
    </location>
</feature>
<feature type="helix" evidence="3">
    <location>
        <begin position="429"/>
        <end position="438"/>
    </location>
</feature>
<sequence>MTEQKRKLEKLTGVKGMNDILPQDAGLWEFFEATVKSLLRAYGYQNIRTPIVEHTPLFTRGIGEVTDIVEKEMYSFVDALNGENLTLRPENTAAVVRAAIEHNMLYDGPKRLWYIGPMFRHERPQRGRYRQFHQVGVEALGFAGPDADAEIVMMCQRLWEDLGLTGIKLEINSLGLAEERAAHRVELIKYLEQHADKLDDDAQRRLYTNPLRVLDTKNPALQEIVRNAPKLIDFLGDVSRAHFEGLQRLLKANNVPFTINPRLVRGLDYYNLTVFEWVTDKLGAQGTVAAGGRYDPLIEQLGGKPTAACGWAMGIERILELLKEEHLVPEQEGVDVYVVHQGDAAREQAFIVAERLRDTGLDVILHCSADGAGASFKSQMKRADASGAAFAVIFGEDEVTNGTASVKPLRGTGDDGEKSVQQSVPVESLTEFLINAMVATAEDGDD</sequence>
<dbReference type="EC" id="6.1.1.21" evidence="1"/>
<dbReference type="EMBL" id="CP000086">
    <property type="protein sequence ID" value="ABC38552.1"/>
    <property type="molecule type" value="Genomic_DNA"/>
</dbReference>
<dbReference type="RefSeq" id="WP_009890821.1">
    <property type="nucleotide sequence ID" value="NZ_CP008785.1"/>
</dbReference>
<dbReference type="PDB" id="4E51">
    <property type="method" value="X-ray"/>
    <property type="resolution" value="2.65 A"/>
    <property type="chains" value="A/B=1-446"/>
</dbReference>
<dbReference type="PDBsum" id="4E51"/>
<dbReference type="SMR" id="Q2SWE3"/>
<dbReference type="GeneID" id="45121953"/>
<dbReference type="KEGG" id="bte:BTH_I2235"/>
<dbReference type="HOGENOM" id="CLU_025113_1_0_4"/>
<dbReference type="EvolutionaryTrace" id="Q2SWE3"/>
<dbReference type="Proteomes" id="UP000001930">
    <property type="component" value="Chromosome I"/>
</dbReference>
<dbReference type="GO" id="GO:0005737">
    <property type="term" value="C:cytoplasm"/>
    <property type="evidence" value="ECO:0007669"/>
    <property type="project" value="UniProtKB-SubCell"/>
</dbReference>
<dbReference type="GO" id="GO:0005524">
    <property type="term" value="F:ATP binding"/>
    <property type="evidence" value="ECO:0007669"/>
    <property type="project" value="UniProtKB-UniRule"/>
</dbReference>
<dbReference type="GO" id="GO:0004821">
    <property type="term" value="F:histidine-tRNA ligase activity"/>
    <property type="evidence" value="ECO:0007669"/>
    <property type="project" value="UniProtKB-UniRule"/>
</dbReference>
<dbReference type="GO" id="GO:0006427">
    <property type="term" value="P:histidyl-tRNA aminoacylation"/>
    <property type="evidence" value="ECO:0007669"/>
    <property type="project" value="UniProtKB-UniRule"/>
</dbReference>
<dbReference type="CDD" id="cd00773">
    <property type="entry name" value="HisRS-like_core"/>
    <property type="match status" value="1"/>
</dbReference>
<dbReference type="CDD" id="cd00859">
    <property type="entry name" value="HisRS_anticodon"/>
    <property type="match status" value="1"/>
</dbReference>
<dbReference type="FunFam" id="3.30.930.10:FF:000005">
    <property type="entry name" value="Histidine--tRNA ligase"/>
    <property type="match status" value="1"/>
</dbReference>
<dbReference type="Gene3D" id="3.40.50.800">
    <property type="entry name" value="Anticodon-binding domain"/>
    <property type="match status" value="1"/>
</dbReference>
<dbReference type="Gene3D" id="3.30.930.10">
    <property type="entry name" value="Bira Bifunctional Protein, Domain 2"/>
    <property type="match status" value="1"/>
</dbReference>
<dbReference type="HAMAP" id="MF_00127">
    <property type="entry name" value="His_tRNA_synth"/>
    <property type="match status" value="1"/>
</dbReference>
<dbReference type="InterPro" id="IPR006195">
    <property type="entry name" value="aa-tRNA-synth_II"/>
</dbReference>
<dbReference type="InterPro" id="IPR045864">
    <property type="entry name" value="aa-tRNA-synth_II/BPL/LPL"/>
</dbReference>
<dbReference type="InterPro" id="IPR004154">
    <property type="entry name" value="Anticodon-bd"/>
</dbReference>
<dbReference type="InterPro" id="IPR036621">
    <property type="entry name" value="Anticodon-bd_dom_sf"/>
</dbReference>
<dbReference type="InterPro" id="IPR015807">
    <property type="entry name" value="His-tRNA-ligase"/>
</dbReference>
<dbReference type="InterPro" id="IPR041715">
    <property type="entry name" value="HisRS-like_core"/>
</dbReference>
<dbReference type="InterPro" id="IPR004516">
    <property type="entry name" value="HisRS/HisZ"/>
</dbReference>
<dbReference type="InterPro" id="IPR033656">
    <property type="entry name" value="HisRS_anticodon"/>
</dbReference>
<dbReference type="NCBIfam" id="TIGR00442">
    <property type="entry name" value="hisS"/>
    <property type="match status" value="1"/>
</dbReference>
<dbReference type="PANTHER" id="PTHR43707:SF1">
    <property type="entry name" value="HISTIDINE--TRNA LIGASE, MITOCHONDRIAL-RELATED"/>
    <property type="match status" value="1"/>
</dbReference>
<dbReference type="PANTHER" id="PTHR43707">
    <property type="entry name" value="HISTIDYL-TRNA SYNTHETASE"/>
    <property type="match status" value="1"/>
</dbReference>
<dbReference type="Pfam" id="PF03129">
    <property type="entry name" value="HGTP_anticodon"/>
    <property type="match status" value="1"/>
</dbReference>
<dbReference type="Pfam" id="PF13393">
    <property type="entry name" value="tRNA-synt_His"/>
    <property type="match status" value="1"/>
</dbReference>
<dbReference type="PIRSF" id="PIRSF001549">
    <property type="entry name" value="His-tRNA_synth"/>
    <property type="match status" value="1"/>
</dbReference>
<dbReference type="SUPFAM" id="SSF52954">
    <property type="entry name" value="Class II aaRS ABD-related"/>
    <property type="match status" value="1"/>
</dbReference>
<dbReference type="SUPFAM" id="SSF55681">
    <property type="entry name" value="Class II aaRS and biotin synthetases"/>
    <property type="match status" value="1"/>
</dbReference>
<dbReference type="PROSITE" id="PS50862">
    <property type="entry name" value="AA_TRNA_LIGASE_II"/>
    <property type="match status" value="1"/>
</dbReference>
<name>SYH_BURTA</name>
<comment type="catalytic activity">
    <reaction evidence="1">
        <text>tRNA(His) + L-histidine + ATP = L-histidyl-tRNA(His) + AMP + diphosphate + H(+)</text>
        <dbReference type="Rhea" id="RHEA:17313"/>
        <dbReference type="Rhea" id="RHEA-COMP:9665"/>
        <dbReference type="Rhea" id="RHEA-COMP:9689"/>
        <dbReference type="ChEBI" id="CHEBI:15378"/>
        <dbReference type="ChEBI" id="CHEBI:30616"/>
        <dbReference type="ChEBI" id="CHEBI:33019"/>
        <dbReference type="ChEBI" id="CHEBI:57595"/>
        <dbReference type="ChEBI" id="CHEBI:78442"/>
        <dbReference type="ChEBI" id="CHEBI:78527"/>
        <dbReference type="ChEBI" id="CHEBI:456215"/>
        <dbReference type="EC" id="6.1.1.21"/>
    </reaction>
</comment>
<comment type="subunit">
    <text evidence="1">Homodimer.</text>
</comment>
<comment type="subcellular location">
    <subcellularLocation>
        <location evidence="1">Cytoplasm</location>
    </subcellularLocation>
</comment>
<comment type="similarity">
    <text evidence="1">Belongs to the class-II aminoacyl-tRNA synthetase family.</text>
</comment>